<reference key="1">
    <citation type="journal article" date="1998" name="Virology">
        <title>Increased ratio of bcl-2/bax expression is associated with bovine leukemia virus-induced leukemogenesis in cattle.</title>
        <authorList>
            <person name="Reyes R.A."/>
            <person name="Cockerell G.L."/>
        </authorList>
    </citation>
    <scope>NUCLEOTIDE SEQUENCE [MRNA]</scope>
    <source>
        <strain>Holstein</strain>
        <tissue>Thymus</tissue>
    </source>
</reference>
<evidence type="ECO:0000250" key="1"/>
<evidence type="ECO:0000250" key="2">
    <source>
        <dbReference type="UniProtKB" id="P10415"/>
    </source>
</evidence>
<evidence type="ECO:0000250" key="3">
    <source>
        <dbReference type="UniProtKB" id="P10417"/>
    </source>
</evidence>
<evidence type="ECO:0000255" key="4"/>
<evidence type="ECO:0000256" key="5">
    <source>
        <dbReference type="SAM" id="MobiDB-lite"/>
    </source>
</evidence>
<evidence type="ECO:0000305" key="6"/>
<name>BCL2_BOVIN</name>
<keyword id="KW-0053">Apoptosis</keyword>
<keyword id="KW-0072">Autophagy</keyword>
<keyword id="KW-0963">Cytoplasm</keyword>
<keyword id="KW-0256">Endoplasmic reticulum</keyword>
<keyword id="KW-0472">Membrane</keyword>
<keyword id="KW-0496">Mitochondrion</keyword>
<keyword id="KW-1000">Mitochondrion outer membrane</keyword>
<keyword id="KW-0539">Nucleus</keyword>
<keyword id="KW-0597">Phosphoprotein</keyword>
<keyword id="KW-1185">Reference proteome</keyword>
<keyword id="KW-0812">Transmembrane</keyword>
<keyword id="KW-1133">Transmembrane helix</keyword>
<keyword id="KW-0832">Ubl conjugation</keyword>
<feature type="chain" id="PRO_0000143046" description="Apoptosis regulator Bcl-2">
    <location>
        <begin position="1"/>
        <end position="229"/>
    </location>
</feature>
<feature type="transmembrane region" description="Helical" evidence="4">
    <location>
        <begin position="202"/>
        <end position="223"/>
    </location>
</feature>
<feature type="region of interest" description="Disordered" evidence="5">
    <location>
        <begin position="30"/>
        <end position="82"/>
    </location>
</feature>
<feature type="short sequence motif" description="BH4">
    <location>
        <begin position="10"/>
        <end position="30"/>
    </location>
</feature>
<feature type="short sequence motif" description="BH3">
    <location>
        <begin position="83"/>
        <end position="97"/>
    </location>
</feature>
<feature type="short sequence motif" description="BH1">
    <location>
        <begin position="126"/>
        <end position="145"/>
    </location>
</feature>
<feature type="short sequence motif" description="BH2">
    <location>
        <begin position="177"/>
        <end position="192"/>
    </location>
</feature>
<feature type="compositionally biased region" description="Low complexity" evidence="5">
    <location>
        <begin position="33"/>
        <end position="61"/>
    </location>
</feature>
<feature type="compositionally biased region" description="Pro residues" evidence="5">
    <location>
        <begin position="62"/>
        <end position="81"/>
    </location>
</feature>
<feature type="site" description="Cleavage; by caspases" evidence="1">
    <location>
        <begin position="34"/>
        <end position="35"/>
    </location>
</feature>
<feature type="modified residue" description="Phosphothreonine; by MAPK8" evidence="2">
    <location>
        <position position="62"/>
    </location>
</feature>
<feature type="modified residue" description="Phosphoserine; by MAPK8 and PKC" evidence="2">
    <location>
        <position position="63"/>
    </location>
</feature>
<feature type="modified residue" description="Phosphoserine; by MAPK8" evidence="2">
    <location>
        <position position="77"/>
    </location>
</feature>
<sequence>MAHAGGTGYDNREIVMKYIHYKLSQRGYEWDAGDAGAAPPGAAPAPGILSSQPGRTPAPSRTSPPPPPAAAAGPAPSPVPPVVHLTLRQAGDDFSRRYRRDFAEMSSQLHLTPFTARERFATVVEELFRDGVNWGRIVAFFEFGGVMCVESVNREMSPLVDSIALWMTEYLNRHLHTWIQDNGGWDAFVELYGPSMRPLFDFSWLSLKALLSLALVGACITLGAYLGHK</sequence>
<organism>
    <name type="scientific">Bos taurus</name>
    <name type="common">Bovine</name>
    <dbReference type="NCBI Taxonomy" id="9913"/>
    <lineage>
        <taxon>Eukaryota</taxon>
        <taxon>Metazoa</taxon>
        <taxon>Chordata</taxon>
        <taxon>Craniata</taxon>
        <taxon>Vertebrata</taxon>
        <taxon>Euteleostomi</taxon>
        <taxon>Mammalia</taxon>
        <taxon>Eutheria</taxon>
        <taxon>Laurasiatheria</taxon>
        <taxon>Artiodactyla</taxon>
        <taxon>Ruminantia</taxon>
        <taxon>Pecora</taxon>
        <taxon>Bovidae</taxon>
        <taxon>Bovinae</taxon>
        <taxon>Bos</taxon>
    </lineage>
</organism>
<proteinExistence type="evidence at transcript level"/>
<accession>O02718</accession>
<protein>
    <recommendedName>
        <fullName>Apoptosis regulator Bcl-2</fullName>
    </recommendedName>
</protein>
<dbReference type="EMBL" id="U92434">
    <property type="protein sequence ID" value="AAB53319.1"/>
    <property type="molecule type" value="mRNA"/>
</dbReference>
<dbReference type="SMR" id="O02718"/>
<dbReference type="FunCoup" id="O02718">
    <property type="interactions" value="199"/>
</dbReference>
<dbReference type="STRING" id="9913.ENSBTAP00000025701"/>
<dbReference type="PaxDb" id="9913-ENSBTAP00000025701"/>
<dbReference type="eggNOG" id="KOG4728">
    <property type="taxonomic scope" value="Eukaryota"/>
</dbReference>
<dbReference type="InParanoid" id="O02718"/>
<dbReference type="OrthoDB" id="6021377at2759"/>
<dbReference type="Proteomes" id="UP000009136">
    <property type="component" value="Unplaced"/>
</dbReference>
<dbReference type="GO" id="GO:0005789">
    <property type="term" value="C:endoplasmic reticulum membrane"/>
    <property type="evidence" value="ECO:0000250"/>
    <property type="project" value="UniProtKB"/>
</dbReference>
<dbReference type="GO" id="GO:0016020">
    <property type="term" value="C:membrane"/>
    <property type="evidence" value="ECO:0000314"/>
    <property type="project" value="UniProtKB"/>
</dbReference>
<dbReference type="GO" id="GO:0005741">
    <property type="term" value="C:mitochondrial outer membrane"/>
    <property type="evidence" value="ECO:0000250"/>
    <property type="project" value="UniProtKB"/>
</dbReference>
<dbReference type="GO" id="GO:0005739">
    <property type="term" value="C:mitochondrion"/>
    <property type="evidence" value="ECO:0000250"/>
    <property type="project" value="HGNC"/>
</dbReference>
<dbReference type="GO" id="GO:0031965">
    <property type="term" value="C:nuclear membrane"/>
    <property type="evidence" value="ECO:0007669"/>
    <property type="project" value="UniProtKB-SubCell"/>
</dbReference>
<dbReference type="GO" id="GO:0015267">
    <property type="term" value="F:channel activity"/>
    <property type="evidence" value="ECO:0000318"/>
    <property type="project" value="GO_Central"/>
</dbReference>
<dbReference type="GO" id="GO:0006914">
    <property type="term" value="P:autophagy"/>
    <property type="evidence" value="ECO:0007669"/>
    <property type="project" value="UniProtKB-KW"/>
</dbReference>
<dbReference type="GO" id="GO:0097192">
    <property type="term" value="P:extrinsic apoptotic signaling pathway in absence of ligand"/>
    <property type="evidence" value="ECO:0000318"/>
    <property type="project" value="GO_Central"/>
</dbReference>
<dbReference type="GO" id="GO:0008630">
    <property type="term" value="P:intrinsic apoptotic signaling pathway in response to DNA damage"/>
    <property type="evidence" value="ECO:0000318"/>
    <property type="project" value="GO_Central"/>
</dbReference>
<dbReference type="GO" id="GO:0043066">
    <property type="term" value="P:negative regulation of apoptotic process"/>
    <property type="evidence" value="ECO:0000250"/>
    <property type="project" value="HGNC"/>
</dbReference>
<dbReference type="GO" id="GO:0010507">
    <property type="term" value="P:negative regulation of autophagy"/>
    <property type="evidence" value="ECO:0000250"/>
    <property type="project" value="UniProtKB"/>
</dbReference>
<dbReference type="GO" id="GO:0032848">
    <property type="term" value="P:negative regulation of cellular pH reduction"/>
    <property type="evidence" value="ECO:0000250"/>
    <property type="project" value="HGNC"/>
</dbReference>
<dbReference type="GO" id="GO:0043065">
    <property type="term" value="P:positive regulation of apoptotic process"/>
    <property type="evidence" value="ECO:0000318"/>
    <property type="project" value="GO_Central"/>
</dbReference>
<dbReference type="GO" id="GO:0046902">
    <property type="term" value="P:regulation of mitochondrial membrane permeability"/>
    <property type="evidence" value="ECO:0000250"/>
    <property type="project" value="HGNC-UCL"/>
</dbReference>
<dbReference type="GO" id="GO:0051881">
    <property type="term" value="P:regulation of mitochondrial membrane potential"/>
    <property type="evidence" value="ECO:0000250"/>
    <property type="project" value="HGNC-UCL"/>
</dbReference>
<dbReference type="GO" id="GO:0001836">
    <property type="term" value="P:release of cytochrome c from mitochondria"/>
    <property type="evidence" value="ECO:0000250"/>
    <property type="project" value="HGNC-UCL"/>
</dbReference>
<dbReference type="CDD" id="cd06845">
    <property type="entry name" value="Bcl-2_like"/>
    <property type="match status" value="1"/>
</dbReference>
<dbReference type="FunFam" id="1.10.437.10:FF:000006">
    <property type="entry name" value="Apoptosis regulator Bcl-2"/>
    <property type="match status" value="1"/>
</dbReference>
<dbReference type="Gene3D" id="1.10.437.10">
    <property type="entry name" value="Blc2-like"/>
    <property type="match status" value="1"/>
</dbReference>
<dbReference type="InterPro" id="IPR013278">
    <property type="entry name" value="Apop_reg_Bcl2"/>
</dbReference>
<dbReference type="InterPro" id="IPR036834">
    <property type="entry name" value="Bcl-2-like_sf"/>
</dbReference>
<dbReference type="InterPro" id="IPR046371">
    <property type="entry name" value="Bcl-2_BH1-3"/>
</dbReference>
<dbReference type="InterPro" id="IPR026298">
    <property type="entry name" value="Bcl-2_fam"/>
</dbReference>
<dbReference type="InterPro" id="IPR002475">
    <property type="entry name" value="Bcl2-like"/>
</dbReference>
<dbReference type="InterPro" id="IPR004725">
    <property type="entry name" value="Bcl2/BclX"/>
</dbReference>
<dbReference type="InterPro" id="IPR020717">
    <property type="entry name" value="Bcl2_BH1_motif_CS"/>
</dbReference>
<dbReference type="InterPro" id="IPR020726">
    <property type="entry name" value="Bcl2_BH2_motif_CS"/>
</dbReference>
<dbReference type="InterPro" id="IPR020728">
    <property type="entry name" value="Bcl2_BH3_motif_CS"/>
</dbReference>
<dbReference type="InterPro" id="IPR003093">
    <property type="entry name" value="Bcl2_BH4"/>
</dbReference>
<dbReference type="InterPro" id="IPR020731">
    <property type="entry name" value="Bcl2_BH4_motif_CS"/>
</dbReference>
<dbReference type="NCBIfam" id="TIGR00865">
    <property type="entry name" value="bcl-2"/>
    <property type="match status" value="1"/>
</dbReference>
<dbReference type="PANTHER" id="PTHR11256:SF11">
    <property type="entry name" value="APOPTOSIS REGULATOR BCL-2"/>
    <property type="match status" value="1"/>
</dbReference>
<dbReference type="PANTHER" id="PTHR11256">
    <property type="entry name" value="BCL-2 RELATED"/>
    <property type="match status" value="1"/>
</dbReference>
<dbReference type="Pfam" id="PF00452">
    <property type="entry name" value="Bcl-2"/>
    <property type="match status" value="1"/>
</dbReference>
<dbReference type="Pfam" id="PF02180">
    <property type="entry name" value="BH4"/>
    <property type="match status" value="1"/>
</dbReference>
<dbReference type="PRINTS" id="PR01863">
    <property type="entry name" value="APOPREGBCL2"/>
</dbReference>
<dbReference type="PRINTS" id="PR01862">
    <property type="entry name" value="BCL2FAMILY"/>
</dbReference>
<dbReference type="SMART" id="SM00337">
    <property type="entry name" value="BCL"/>
    <property type="match status" value="1"/>
</dbReference>
<dbReference type="SMART" id="SM00265">
    <property type="entry name" value="BH4"/>
    <property type="match status" value="1"/>
</dbReference>
<dbReference type="SUPFAM" id="SSF56854">
    <property type="entry name" value="Bcl-2 inhibitors of programmed cell death"/>
    <property type="match status" value="1"/>
</dbReference>
<dbReference type="PROSITE" id="PS50062">
    <property type="entry name" value="BCL2_FAMILY"/>
    <property type="match status" value="1"/>
</dbReference>
<dbReference type="PROSITE" id="PS01080">
    <property type="entry name" value="BH1"/>
    <property type="match status" value="1"/>
</dbReference>
<dbReference type="PROSITE" id="PS01258">
    <property type="entry name" value="BH2"/>
    <property type="match status" value="1"/>
</dbReference>
<dbReference type="PROSITE" id="PS01259">
    <property type="entry name" value="BH3"/>
    <property type="match status" value="1"/>
</dbReference>
<dbReference type="PROSITE" id="PS01260">
    <property type="entry name" value="BH4_1"/>
    <property type="match status" value="1"/>
</dbReference>
<dbReference type="PROSITE" id="PS50063">
    <property type="entry name" value="BH4_2"/>
    <property type="match status" value="1"/>
</dbReference>
<gene>
    <name type="primary">BCL2</name>
</gene>
<comment type="function">
    <text evidence="2">Suppresses apoptosis in a variety of cell systems including factor-dependent lymphohematopoietic and neural cells. Regulates cell death by controlling the mitochondrial membrane permeability. Appears to function in a feedback loop system with caspases. Inhibits caspase activity either by preventing the release of cytochrome c from the mitochondria and/or by binding to the apoptosis-activating factor (APAF-1). Also acts as an inhibitor of autophagy: interacts with BECN1 and AMBRA1 during non-starvation conditions and inhibits their autophagy function. May attenuate inflammation by impairing NLRP1-inflammasome activation, hence CASP1 activation and IL1B release.</text>
</comment>
<comment type="subunit">
    <text evidence="2 3">Forms homodimers, and heterodimers with BAX, BAD, BAK and Bcl-X(L). Heterodimerization with BAX requires intact BH1 and BH2 motifs, and is necessary for anti-apoptotic activity (By similarity). Component of the complex, at least composed of LRPPRC, BECN1 and BCL2; the interactions prevent BECN1 from forming an autophagy-inducing complex with PIK3C3 (By similarity). Interacts with EI24 (By similarity). Also interacts with APAF1, BBC3, BCL2L1, BNIPL, MRPL41 and TP53BP2. Binding to FKBP8 seems to target BCL2 to the mitochondria and probably interferes with the binding of BCL2 to its targets. Interacts with BAG1 in an ATP-dependent manner. Interacts with RAF1 (the 'Ser-338' and 'Ser-339' phosphorylated form). Interacts (via the BH4 domain) with EGLN3; the interaction prevents the formation of the BAX-BCL2 complex and inhibits the anti-apoptotic activity of BCL2. Interacts with G0S2; this interaction also prevents the formation of the anti-apoptotic BAX-BCL2 complex. Interacts with RTL10/BOP. Interacts with the SCF(FBXO10) complex. Interacts (via the loop between motifs BH4 and BH3) with NLRP1 (via LRR repeats), but not with NLRP2, NLRP3, NLRP4, PYCARD, nor MEFV (By similarity). Interacts with GIMAP3/IAN4, GIMAP4/IAN1 and GIMAP5/IAN5 (By similarity). Interacts with BCAP31. Interacts with IRF3; the interaction is inhibited by Sendai virus infection. Interacts with BECN1; thereby inhibiting autophagy in non-starvation conditions. Interacts with AMBRA1; thereby inhibiting autophagy (By similarity).</text>
</comment>
<comment type="subcellular location">
    <subcellularLocation>
        <location evidence="2">Mitochondrion outer membrane</location>
        <topology evidence="4">Single-pass membrane protein</topology>
    </subcellularLocation>
    <subcellularLocation>
        <location evidence="2">Nucleus membrane</location>
        <topology evidence="4">Single-pass membrane protein</topology>
    </subcellularLocation>
    <subcellularLocation>
        <location evidence="2">Endoplasmic reticulum membrane</location>
        <topology evidence="4">Single-pass membrane protein</topology>
    </subcellularLocation>
    <subcellularLocation>
        <location evidence="3">Cytoplasm</location>
    </subcellularLocation>
</comment>
<comment type="domain">
    <text evidence="1">The BH4 motif is required for anti-apoptotic activity and for interaction with RAF1 and EGLN3.</text>
</comment>
<comment type="domain">
    <text evidence="2">BH1 and BH2 domains are required for the interaction with BAX and for anti-apoptotic activity.</text>
</comment>
<comment type="domain">
    <text evidence="2">The BH3 motif is required for XIAP-mediated ubiquitination and subsequent induction of apoptosis.</text>
</comment>
<comment type="domain">
    <text evidence="2">The loop between motifs BH4 and BH3 is required for the interaction with NLRP1.</text>
</comment>
<comment type="PTM">
    <text evidence="2 3">Phosphorylation/dephosphorylation on Ser-63 regulates anti-apoptotic activity. Growth factor-stimulated phosphorylation on Ser-63 by PKC is required for the anti-apoptosis activity and occurs during the G2/M phase of the cell cycle (By similarity). In the absence of growth factors, BCL2 appears to be phosphorylated by other protein kinases such as ERKs and stress-activated kinases. Phosphorylated by MAPK8/JNK1 at Thr-62, Ser-63 and Ser-77, which stimulates starvation-induced autophagy (By similarity). Dephosphorylated by protein phosphatase 2A (PP2A) (By similarity).</text>
</comment>
<comment type="PTM">
    <text evidence="2">Proteolytically cleaved by caspases during apoptosis. The cleaved protein, lacking the BH4 motif, has pro-apoptotic activity, causes the release of cytochrome c into the cytosol promoting further caspase activity (By similarity).</text>
</comment>
<comment type="PTM">
    <text evidence="2">Monoubiquitinated by PRKN, leading to an increase in its stability. Ubiquitinated by SCF(FBXO10), leading to its degradation by the proteasome.</text>
</comment>
<comment type="similarity">
    <text evidence="6">Belongs to the Bcl-2 family.</text>
</comment>